<protein>
    <recommendedName>
        <fullName>Disintegrin and metalloproteinase domain-containing protein 2</fullName>
        <shortName>ADAM 2</shortName>
    </recommendedName>
    <alternativeName>
        <fullName>Fertilin subunit beta</fullName>
    </alternativeName>
    <alternativeName>
        <fullName>PH-30</fullName>
        <shortName>PH30</shortName>
    </alternativeName>
    <alternativeName>
        <fullName>PH30-beta</fullName>
    </alternativeName>
</protein>
<comment type="function">
    <text evidence="1">Sperm surface membrane protein that may be involved in sperm-egg plasma membrane adhesion and fusion during fertilization. Could have a direct role in sperm-zona binding or migration of sperm from the uterus into the oviduct. Interactions with egg membrane could be mediated via binding between its disintegrin-like domain to one or more integrins receptors on the egg. This is a non catalytic metalloprotease-like protein (By similarity).</text>
</comment>
<comment type="subunit">
    <text>Heterodimer with ADAM1/fertilin subunit alpha.</text>
</comment>
<comment type="subcellular location">
    <subcellularLocation>
        <location>Membrane</location>
        <topology>Single-pass type I membrane protein</topology>
    </subcellularLocation>
</comment>
<comment type="domain">
    <text evidence="1">A tripeptide motif (NQE) within disintegrin-like domain could be involved in the binding to egg integrin receptor and thus could mediate sperm/egg binding.</text>
</comment>
<comment type="PTM">
    <text evidence="1">The prodomain and the metalloprotease domain are cleaved during the epididymal maturation of the spermatozoa.</text>
</comment>
<comment type="sequence caution" evidence="6">
    <conflict type="erroneous initiation">
        <sequence resource="EMBL-CDS" id="CAA68127"/>
    </conflict>
</comment>
<gene>
    <name type="primary">Adam2</name>
    <name type="synonym">Ftnb</name>
</gene>
<evidence type="ECO:0000250" key="1"/>
<evidence type="ECO:0000255" key="2"/>
<evidence type="ECO:0000255" key="3">
    <source>
        <dbReference type="PROSITE-ProRule" id="PRU00068"/>
    </source>
</evidence>
<evidence type="ECO:0000255" key="4">
    <source>
        <dbReference type="PROSITE-ProRule" id="PRU00076"/>
    </source>
</evidence>
<evidence type="ECO:0000255" key="5">
    <source>
        <dbReference type="PROSITE-ProRule" id="PRU00276"/>
    </source>
</evidence>
<evidence type="ECO:0000305" key="6"/>
<evidence type="ECO:0007744" key="7">
    <source>
    </source>
</evidence>
<feature type="signal peptide" evidence="2">
    <location>
        <begin position="1"/>
        <end position="18"/>
    </location>
</feature>
<feature type="propeptide" id="PRO_0000029050" evidence="1">
    <location>
        <begin position="19"/>
        <end position="180"/>
    </location>
</feature>
<feature type="chain" id="PRO_0000029051" description="Disintegrin and metalloproteinase domain-containing protein 2">
    <location>
        <begin position="181"/>
        <end position="737"/>
    </location>
</feature>
<feature type="topological domain" description="Extracellular" evidence="2">
    <location>
        <begin position="19"/>
        <end position="688"/>
    </location>
</feature>
<feature type="transmembrane region" description="Helical" evidence="2">
    <location>
        <begin position="689"/>
        <end position="709"/>
    </location>
</feature>
<feature type="topological domain" description="Cytoplasmic" evidence="2">
    <location>
        <begin position="710"/>
        <end position="737"/>
    </location>
</feature>
<feature type="domain" description="Peptidase M12B" evidence="5">
    <location>
        <begin position="184"/>
        <end position="381"/>
    </location>
</feature>
<feature type="domain" description="Disintegrin" evidence="3">
    <location>
        <begin position="389"/>
        <end position="478"/>
    </location>
</feature>
<feature type="domain" description="EGF-like" evidence="4">
    <location>
        <begin position="617"/>
        <end position="650"/>
    </location>
</feature>
<feature type="modified residue" description="Phosphoserine" evidence="7">
    <location>
        <position position="731"/>
    </location>
</feature>
<feature type="glycosylation site" description="N-linked (GlcNAc...) asparagine" evidence="2">
    <location>
        <position position="128"/>
    </location>
</feature>
<feature type="glycosylation site" description="N-linked (GlcNAc...) asparagine" evidence="2">
    <location>
        <position position="226"/>
    </location>
</feature>
<feature type="glycosylation site" description="N-linked (GlcNAc...) asparagine" evidence="2">
    <location>
        <position position="359"/>
    </location>
</feature>
<feature type="glycosylation site" description="N-linked (GlcNAc...) asparagine" evidence="2">
    <location>
        <position position="464"/>
    </location>
</feature>
<feature type="glycosylation site" description="N-linked (GlcNAc...) asparagine" evidence="2">
    <location>
        <position position="491"/>
    </location>
</feature>
<feature type="glycosylation site" description="N-linked (GlcNAc...) asparagine" evidence="2">
    <location>
        <position position="571"/>
    </location>
</feature>
<feature type="disulfide bond" evidence="1">
    <location>
        <begin position="293"/>
        <end position="376"/>
    </location>
</feature>
<feature type="disulfide bond" evidence="1">
    <location>
        <begin position="335"/>
        <end position="360"/>
    </location>
</feature>
<feature type="disulfide bond" evidence="1">
    <location>
        <begin position="337"/>
        <end position="342"/>
    </location>
</feature>
<feature type="disulfide bond" evidence="1">
    <location>
        <begin position="450"/>
        <end position="470"/>
    </location>
</feature>
<feature type="disulfide bond" evidence="1">
    <location>
        <begin position="621"/>
        <end position="632"/>
    </location>
</feature>
<feature type="disulfide bond" evidence="1">
    <location>
        <begin position="626"/>
        <end position="638"/>
    </location>
</feature>
<feature type="disulfide bond" evidence="1">
    <location>
        <begin position="640"/>
        <end position="649"/>
    </location>
</feature>
<sequence>MWLLLLLLSGLSRLGGLSEPQTEGTREKLHVQVTVPEKIRSITSEGYETQVTYSLKIEGKTYILNLMQKAFLPPNFRVYSYDSTGIMRPLEQKFQNICYFQGYIEGYPNSMVIVSTCTGLRGVLQFGNVSYGIEPLESSSGFEHVIYQVEPKKGDTLLYAEKDMDLRDPQYKIRSIKPQRTVSHYLEIHIVVEKQMFEHIGADTAVVTQKIFQLIGLTNAIFAPFNLTVILSSLEFWMDENKISTTGDANKLLYRFLKWKQSYLVLRPHDMAFLLVYRDTTDYVGATYQGKMCDKNYAGGVALHPKAVTLESLAIILVQLLSLSMGVAYDDVNTCQCGVPICVMNPEALHSSGVRSFSNCSMEDFSKFIVSQSSHCLQNQPHLQPSYKMAVCGNGELEEGEVCDCGQEGCDDKPPPCCNPTTCQLSEGSTCSTGSCCDASCNLKAKGELCRPANQECDVTEYCNGTSEVCEEDFFVQDGHPCAEQKWICINGTCQSGAQQCRDLFGTDADYGTKECYSELNSKSDISGSCGITPTGYKDCAPNDRMCGKLICIYQSEDILKMRSAIVIYANISGQICISLEYPPGHKESKKMCVRDGTVCGSGKVCLNQECVEDTFLNYDCTPEKCNHHGVCNNKKHCHCEPTYLPPDCKNTEDTWPGGSVDSGNQQRAESIPARSYVASAYRSKSARWPFFLIIPFYVVILVLIGMLVKVYSQRKKWRMDDFSSEEQFESESESKD</sequence>
<proteinExistence type="evidence at protein level"/>
<dbReference type="EMBL" id="X99794">
    <property type="protein sequence ID" value="CAA68127.1"/>
    <property type="status" value="ALT_INIT"/>
    <property type="molecule type" value="mRNA"/>
</dbReference>
<dbReference type="RefSeq" id="NP_064462.1">
    <property type="nucleotide sequence ID" value="NM_020077.1"/>
</dbReference>
<dbReference type="SMR" id="Q63202"/>
<dbReference type="FunCoup" id="Q63202">
    <property type="interactions" value="15"/>
</dbReference>
<dbReference type="STRING" id="10116.ENSRNOP00000061122"/>
<dbReference type="MEROPS" id="M12.950"/>
<dbReference type="GlyCosmos" id="Q63202">
    <property type="glycosylation" value="6 sites, No reported glycans"/>
</dbReference>
<dbReference type="GlyGen" id="Q63202">
    <property type="glycosylation" value="6 sites"/>
</dbReference>
<dbReference type="iPTMnet" id="Q63202"/>
<dbReference type="PhosphoSitePlus" id="Q63202"/>
<dbReference type="PaxDb" id="10116-ENSRNOP00000061122"/>
<dbReference type="GeneID" id="56806"/>
<dbReference type="KEGG" id="rno:56806"/>
<dbReference type="UCSC" id="RGD:69299">
    <property type="organism name" value="rat"/>
</dbReference>
<dbReference type="AGR" id="RGD:69299"/>
<dbReference type="CTD" id="2515"/>
<dbReference type="RGD" id="69299">
    <property type="gene designation" value="Adam2"/>
</dbReference>
<dbReference type="eggNOG" id="KOG3607">
    <property type="taxonomic scope" value="Eukaryota"/>
</dbReference>
<dbReference type="InParanoid" id="Q63202"/>
<dbReference type="PhylomeDB" id="Q63202"/>
<dbReference type="PRO" id="PR:Q63202"/>
<dbReference type="Proteomes" id="UP000002494">
    <property type="component" value="Unplaced"/>
</dbReference>
<dbReference type="GO" id="GO:0001669">
    <property type="term" value="C:acrosomal vesicle"/>
    <property type="evidence" value="ECO:0000314"/>
    <property type="project" value="RGD"/>
</dbReference>
<dbReference type="GO" id="GO:0009986">
    <property type="term" value="C:cell surface"/>
    <property type="evidence" value="ECO:0000266"/>
    <property type="project" value="RGD"/>
</dbReference>
<dbReference type="GO" id="GO:0005886">
    <property type="term" value="C:plasma membrane"/>
    <property type="evidence" value="ECO:0000318"/>
    <property type="project" value="GO_Central"/>
</dbReference>
<dbReference type="GO" id="GO:0032991">
    <property type="term" value="C:protein-containing complex"/>
    <property type="evidence" value="ECO:0000266"/>
    <property type="project" value="RGD"/>
</dbReference>
<dbReference type="GO" id="GO:0004222">
    <property type="term" value="F:metalloendopeptidase activity"/>
    <property type="evidence" value="ECO:0000318"/>
    <property type="project" value="GO_Central"/>
</dbReference>
<dbReference type="GO" id="GO:0030534">
    <property type="term" value="P:adult behavior"/>
    <property type="evidence" value="ECO:0000266"/>
    <property type="project" value="RGD"/>
</dbReference>
<dbReference type="GO" id="GO:0007339">
    <property type="term" value="P:binding of sperm to zona pellucida"/>
    <property type="evidence" value="ECO:0000318"/>
    <property type="project" value="GO_Central"/>
</dbReference>
<dbReference type="GO" id="GO:0007155">
    <property type="term" value="P:cell adhesion"/>
    <property type="evidence" value="ECO:0000266"/>
    <property type="project" value="RGD"/>
</dbReference>
<dbReference type="GO" id="GO:0010467">
    <property type="term" value="P:gene expression"/>
    <property type="evidence" value="ECO:0000266"/>
    <property type="project" value="RGD"/>
</dbReference>
<dbReference type="GO" id="GO:0008584">
    <property type="term" value="P:male gonad development"/>
    <property type="evidence" value="ECO:0000270"/>
    <property type="project" value="RGD"/>
</dbReference>
<dbReference type="GO" id="GO:0010628">
    <property type="term" value="P:positive regulation of gene expression"/>
    <property type="evidence" value="ECO:0000266"/>
    <property type="project" value="RGD"/>
</dbReference>
<dbReference type="GO" id="GO:0006508">
    <property type="term" value="P:proteolysis"/>
    <property type="evidence" value="ECO:0000318"/>
    <property type="project" value="GO_Central"/>
</dbReference>
<dbReference type="GO" id="GO:0007283">
    <property type="term" value="P:spermatogenesis"/>
    <property type="evidence" value="ECO:0000270"/>
    <property type="project" value="RGD"/>
</dbReference>
<dbReference type="GO" id="GO:0008542">
    <property type="term" value="P:visual learning"/>
    <property type="evidence" value="ECO:0000266"/>
    <property type="project" value="RGD"/>
</dbReference>
<dbReference type="CDD" id="cd04269">
    <property type="entry name" value="ZnMc_adamalysin_II_like"/>
    <property type="match status" value="1"/>
</dbReference>
<dbReference type="FunFam" id="3.40.390.10:FF:000033">
    <property type="entry name" value="A disintegrin and metallopeptidase domain 18"/>
    <property type="match status" value="1"/>
</dbReference>
<dbReference type="Gene3D" id="3.40.390.10">
    <property type="entry name" value="Collagenase (Catalytic Domain)"/>
    <property type="match status" value="1"/>
</dbReference>
<dbReference type="Gene3D" id="4.10.70.10">
    <property type="entry name" value="Disintegrin domain"/>
    <property type="match status" value="1"/>
</dbReference>
<dbReference type="InterPro" id="IPR006586">
    <property type="entry name" value="ADAM_Cys-rich"/>
</dbReference>
<dbReference type="InterPro" id="IPR018358">
    <property type="entry name" value="Disintegrin_CS"/>
</dbReference>
<dbReference type="InterPro" id="IPR001762">
    <property type="entry name" value="Disintegrin_dom"/>
</dbReference>
<dbReference type="InterPro" id="IPR036436">
    <property type="entry name" value="Disintegrin_dom_sf"/>
</dbReference>
<dbReference type="InterPro" id="IPR000742">
    <property type="entry name" value="EGF-like_dom"/>
</dbReference>
<dbReference type="InterPro" id="IPR024079">
    <property type="entry name" value="MetalloPept_cat_dom_sf"/>
</dbReference>
<dbReference type="InterPro" id="IPR001590">
    <property type="entry name" value="Peptidase_M12B"/>
</dbReference>
<dbReference type="InterPro" id="IPR002870">
    <property type="entry name" value="Peptidase_M12B_N"/>
</dbReference>
<dbReference type="InterPro" id="IPR034027">
    <property type="entry name" value="Reprolysin_adamalysin"/>
</dbReference>
<dbReference type="PANTHER" id="PTHR11905">
    <property type="entry name" value="ADAM A DISINTEGRIN AND METALLOPROTEASE DOMAIN"/>
    <property type="match status" value="1"/>
</dbReference>
<dbReference type="PANTHER" id="PTHR11905:SF108">
    <property type="entry name" value="DISINTEGRIN AND METALLOPROTEINASE DOMAIN-CONTAINING PROTEIN 2"/>
    <property type="match status" value="1"/>
</dbReference>
<dbReference type="Pfam" id="PF08516">
    <property type="entry name" value="ADAM_CR"/>
    <property type="match status" value="1"/>
</dbReference>
<dbReference type="Pfam" id="PF00200">
    <property type="entry name" value="Disintegrin"/>
    <property type="match status" value="1"/>
</dbReference>
<dbReference type="Pfam" id="PF01562">
    <property type="entry name" value="Pep_M12B_propep"/>
    <property type="match status" value="1"/>
</dbReference>
<dbReference type="Pfam" id="PF01421">
    <property type="entry name" value="Reprolysin"/>
    <property type="match status" value="1"/>
</dbReference>
<dbReference type="SMART" id="SM00608">
    <property type="entry name" value="ACR"/>
    <property type="match status" value="1"/>
</dbReference>
<dbReference type="SMART" id="SM00050">
    <property type="entry name" value="DISIN"/>
    <property type="match status" value="1"/>
</dbReference>
<dbReference type="SUPFAM" id="SSF57552">
    <property type="entry name" value="Blood coagulation inhibitor (disintegrin)"/>
    <property type="match status" value="1"/>
</dbReference>
<dbReference type="SUPFAM" id="SSF55486">
    <property type="entry name" value="Metalloproteases ('zincins'), catalytic domain"/>
    <property type="match status" value="1"/>
</dbReference>
<dbReference type="PROSITE" id="PS50215">
    <property type="entry name" value="ADAM_MEPRO"/>
    <property type="match status" value="1"/>
</dbReference>
<dbReference type="PROSITE" id="PS00427">
    <property type="entry name" value="DISINTEGRIN_1"/>
    <property type="match status" value="1"/>
</dbReference>
<dbReference type="PROSITE" id="PS50214">
    <property type="entry name" value="DISINTEGRIN_2"/>
    <property type="match status" value="1"/>
</dbReference>
<dbReference type="PROSITE" id="PS50026">
    <property type="entry name" value="EGF_3"/>
    <property type="match status" value="1"/>
</dbReference>
<accession>Q63202</accession>
<keyword id="KW-0130">Cell adhesion</keyword>
<keyword id="KW-1015">Disulfide bond</keyword>
<keyword id="KW-0245">EGF-like domain</keyword>
<keyword id="KW-0325">Glycoprotein</keyword>
<keyword id="KW-0472">Membrane</keyword>
<keyword id="KW-0597">Phosphoprotein</keyword>
<keyword id="KW-1185">Reference proteome</keyword>
<keyword id="KW-0732">Signal</keyword>
<keyword id="KW-0812">Transmembrane</keyword>
<keyword id="KW-1133">Transmembrane helix</keyword>
<organism>
    <name type="scientific">Rattus norvegicus</name>
    <name type="common">Rat</name>
    <dbReference type="NCBI Taxonomy" id="10116"/>
    <lineage>
        <taxon>Eukaryota</taxon>
        <taxon>Metazoa</taxon>
        <taxon>Chordata</taxon>
        <taxon>Craniata</taxon>
        <taxon>Vertebrata</taxon>
        <taxon>Euteleostomi</taxon>
        <taxon>Mammalia</taxon>
        <taxon>Eutheria</taxon>
        <taxon>Euarchontoglires</taxon>
        <taxon>Glires</taxon>
        <taxon>Rodentia</taxon>
        <taxon>Myomorpha</taxon>
        <taxon>Muroidea</taxon>
        <taxon>Muridae</taxon>
        <taxon>Murinae</taxon>
        <taxon>Rattus</taxon>
    </lineage>
</organism>
<name>ADAM2_RAT</name>
<reference key="1">
    <citation type="journal article" date="1997" name="Mol. Hum. Reprod.">
        <title>Cloning and sequence analysis of rat fertilin alpha and beta - developmental expression, processing and immunolocalization.</title>
        <authorList>
            <person name="McLaughlin E.A."/>
            <person name="Frayne J."/>
            <person name="Barker H.L."/>
            <person name="Jury J.A."/>
            <person name="Jones R."/>
            <person name="Ford W.C.L."/>
            <person name="Hall L."/>
        </authorList>
    </citation>
    <scope>NUCLEOTIDE SEQUENCE [MRNA]</scope>
    <source>
        <strain>Sprague-Dawley</strain>
        <tissue>Testis</tissue>
    </source>
</reference>
<reference key="2">
    <citation type="journal article" date="2012" name="Nat. Commun.">
        <title>Quantitative maps of protein phosphorylation sites across 14 different rat organs and tissues.</title>
        <authorList>
            <person name="Lundby A."/>
            <person name="Secher A."/>
            <person name="Lage K."/>
            <person name="Nordsborg N.B."/>
            <person name="Dmytriyev A."/>
            <person name="Lundby C."/>
            <person name="Olsen J.V."/>
        </authorList>
    </citation>
    <scope>PHOSPHORYLATION [LARGE SCALE ANALYSIS] AT SER-731</scope>
    <scope>IDENTIFICATION BY MASS SPECTROMETRY [LARGE SCALE ANALYSIS]</scope>
</reference>